<evidence type="ECO:0000250" key="1">
    <source>
        <dbReference type="UniProtKB" id="Q8JZS9"/>
    </source>
</evidence>
<evidence type="ECO:0000250" key="2">
    <source>
        <dbReference type="UniProtKB" id="Q96GC5"/>
    </source>
</evidence>
<evidence type="ECO:0000255" key="3"/>
<evidence type="ECO:0000269" key="4">
    <source>
    </source>
</evidence>
<evidence type="ECO:0000269" key="5">
    <source>
    </source>
</evidence>
<evidence type="ECO:0000305" key="6"/>
<keyword id="KW-0496">Mitochondrion</keyword>
<keyword id="KW-1185">Reference proteome</keyword>
<keyword id="KW-0687">Ribonucleoprotein</keyword>
<keyword id="KW-0689">Ribosomal protein</keyword>
<keyword id="KW-0809">Transit peptide</keyword>
<accession>Q2YDI5</accession>
<organism>
    <name type="scientific">Bos taurus</name>
    <name type="common">Bovine</name>
    <dbReference type="NCBI Taxonomy" id="9913"/>
    <lineage>
        <taxon>Eukaryota</taxon>
        <taxon>Metazoa</taxon>
        <taxon>Chordata</taxon>
        <taxon>Craniata</taxon>
        <taxon>Vertebrata</taxon>
        <taxon>Euteleostomi</taxon>
        <taxon>Mammalia</taxon>
        <taxon>Eutheria</taxon>
        <taxon>Laurasiatheria</taxon>
        <taxon>Artiodactyla</taxon>
        <taxon>Ruminantia</taxon>
        <taxon>Pecora</taxon>
        <taxon>Bovidae</taxon>
        <taxon>Bovinae</taxon>
        <taxon>Bos</taxon>
    </lineage>
</organism>
<sequence length="212" mass="24022">MNGALGKVLCLKNDTIFKQAFSLLRFRTSGENPVYSAGGILLTTSRHYRSKPTHGIGRYKHLVKPEEPKKKKGKVEIRAINVGTDYEYGTLNIHLIAYDMALTESYAQYVHNLCNHLSIKVEESYAMPTKTMEVLQLQDQGNKMLLDSVLTTHERVVQISGLNATFAEIFLEIIQSNLPEGVKLSVREHTEEDFKGRFKARPELEELLAKLN</sequence>
<reference key="1">
    <citation type="submission" date="2005-11" db="EMBL/GenBank/DDBJ databases">
        <authorList>
            <consortium name="NIH - Mammalian Gene Collection (MGC) project"/>
        </authorList>
    </citation>
    <scope>NUCLEOTIDE SEQUENCE [LARGE SCALE MRNA]</scope>
    <source>
        <strain>Crossbred X Angus</strain>
        <tissue>Liver</tissue>
    </source>
</reference>
<reference key="2">
    <citation type="journal article" date="2001" name="J. Biol. Chem.">
        <title>The large subunit of the mammalian mitochondrial ribosome. Analysis of the complement of ribosomal proteins present.</title>
        <authorList>
            <person name="Koc E.C."/>
            <person name="Burkhart W."/>
            <person name="Blackburn K."/>
            <person name="Moyer M.B."/>
            <person name="Schlatzer D.M."/>
            <person name="Moseley A."/>
            <person name="Spremulli L.L."/>
        </authorList>
    </citation>
    <scope>IDENTIFICATION BY MASS SPECTROMETRY</scope>
    <scope>SUBCELLULAR LOCATION</scope>
</reference>
<reference key="3">
    <citation type="journal article" date="2010" name="J. Biol. Chem.">
        <title>Properties of the C-terminal tail of human mitochondrial inner membrane protein Oxa1L and its interactions with mammalian mitochondrial ribosomes.</title>
        <authorList>
            <person name="Haque M.E."/>
            <person name="Elmore K.B."/>
            <person name="Tripathy A."/>
            <person name="Koc H."/>
            <person name="Koc E.C."/>
            <person name="Spremulli L.L."/>
        </authorList>
    </citation>
    <scope>INTERACTION WITH OXA1L</scope>
    <scope>IDENTIFICATION BY MASS SPECTROMETRY</scope>
</reference>
<comment type="subunit">
    <text evidence="2 5">Component of the mitochondrial ribosome large subunit (39S) which comprises a 16S rRNA and about 50 distinct proteins (By similarity). Interacts with OXA1L (PubMed:20601428).</text>
</comment>
<comment type="subcellular location">
    <subcellularLocation>
        <location evidence="4">Mitochondrion</location>
    </subcellularLocation>
</comment>
<comment type="similarity">
    <text evidence="6">Belongs to the mitochondrion-specific ribosomal protein mL48 family.</text>
</comment>
<feature type="transit peptide" description="Mitochondrion" evidence="3">
    <location>
        <begin position="1"/>
        <end position="28"/>
    </location>
</feature>
<feature type="chain" id="PRO_0000261656" description="Large ribosomal subunit protein mL48">
    <location>
        <begin position="29"/>
        <end position="212"/>
    </location>
</feature>
<feature type="modified residue" description="N6-succinyllysine" evidence="1">
    <location>
        <position position="199"/>
    </location>
</feature>
<dbReference type="EMBL" id="BC110207">
    <property type="protein sequence ID" value="AAI10208.1"/>
    <property type="molecule type" value="mRNA"/>
</dbReference>
<dbReference type="RefSeq" id="NP_001040028.1">
    <property type="nucleotide sequence ID" value="NM_001046563.2"/>
</dbReference>
<dbReference type="SMR" id="Q2YDI5"/>
<dbReference type="FunCoup" id="Q2YDI5">
    <property type="interactions" value="1231"/>
</dbReference>
<dbReference type="STRING" id="9913.ENSBTAP00000042506"/>
<dbReference type="PaxDb" id="9913-ENSBTAP00000042506"/>
<dbReference type="Ensembl" id="ENSBTAT00000109381.1">
    <property type="protein sequence ID" value="ENSBTAP00000075287.1"/>
    <property type="gene ID" value="ENSBTAG00000008347.6"/>
</dbReference>
<dbReference type="GeneID" id="615873"/>
<dbReference type="KEGG" id="bta:615873"/>
<dbReference type="CTD" id="51642"/>
<dbReference type="VEuPathDB" id="HostDB:ENSBTAG00000008347"/>
<dbReference type="VGNC" id="VGNC:31643">
    <property type="gene designation" value="MRPL48"/>
</dbReference>
<dbReference type="eggNOG" id="KOG4060">
    <property type="taxonomic scope" value="Eukaryota"/>
</dbReference>
<dbReference type="GeneTree" id="ENSGT00390000012955"/>
<dbReference type="HOGENOM" id="CLU_095928_0_0_1"/>
<dbReference type="InParanoid" id="Q2YDI5"/>
<dbReference type="OMA" id="MKQHTEA"/>
<dbReference type="OrthoDB" id="5984298at2759"/>
<dbReference type="TreeFam" id="TF315130"/>
<dbReference type="Reactome" id="R-BTA-5389840">
    <property type="pathway name" value="Mitochondrial translation elongation"/>
</dbReference>
<dbReference type="Reactome" id="R-BTA-5419276">
    <property type="pathway name" value="Mitochondrial translation termination"/>
</dbReference>
<dbReference type="Proteomes" id="UP000009136">
    <property type="component" value="Chromosome 15"/>
</dbReference>
<dbReference type="Bgee" id="ENSBTAG00000008347">
    <property type="expression patterns" value="Expressed in oocyte and 105 other cell types or tissues"/>
</dbReference>
<dbReference type="GO" id="GO:0005743">
    <property type="term" value="C:mitochondrial inner membrane"/>
    <property type="evidence" value="ECO:0000304"/>
    <property type="project" value="Reactome"/>
</dbReference>
<dbReference type="GO" id="GO:0005762">
    <property type="term" value="C:mitochondrial large ribosomal subunit"/>
    <property type="evidence" value="ECO:0000250"/>
    <property type="project" value="UniProtKB"/>
</dbReference>
<dbReference type="GO" id="GO:0005761">
    <property type="term" value="C:mitochondrial ribosome"/>
    <property type="evidence" value="ECO:0000250"/>
    <property type="project" value="UniProtKB"/>
</dbReference>
<dbReference type="FunFam" id="3.30.70.600:FF:000006">
    <property type="entry name" value="39S ribosomal protein L48, mitochondrial"/>
    <property type="match status" value="1"/>
</dbReference>
<dbReference type="Gene3D" id="3.30.70.600">
    <property type="entry name" value="Ribosomal protein S10 domain"/>
    <property type="match status" value="1"/>
</dbReference>
<dbReference type="InterPro" id="IPR027487">
    <property type="entry name" value="Ribosomal_mL48"/>
</dbReference>
<dbReference type="InterPro" id="IPR027486">
    <property type="entry name" value="Ribosomal_uS10_dom"/>
</dbReference>
<dbReference type="InterPro" id="IPR036838">
    <property type="entry name" value="Ribosomal_uS10_dom_sf"/>
</dbReference>
<dbReference type="PANTHER" id="PTHR13473:SF0">
    <property type="entry name" value="LARGE RIBOSOMAL SUBUNIT PROTEIN ML48"/>
    <property type="match status" value="1"/>
</dbReference>
<dbReference type="PANTHER" id="PTHR13473">
    <property type="entry name" value="MITOCHONDRIAL RIBOSOMAL PROTEIN L48"/>
    <property type="match status" value="1"/>
</dbReference>
<dbReference type="Pfam" id="PF00338">
    <property type="entry name" value="Ribosomal_S10"/>
    <property type="match status" value="1"/>
</dbReference>
<dbReference type="SMART" id="SM01403">
    <property type="entry name" value="Ribosomal_S10"/>
    <property type="match status" value="1"/>
</dbReference>
<dbReference type="SUPFAM" id="SSF54999">
    <property type="entry name" value="Ribosomal protein S10"/>
    <property type="match status" value="1"/>
</dbReference>
<protein>
    <recommendedName>
        <fullName evidence="6">Large ribosomal subunit protein mL48</fullName>
    </recommendedName>
    <alternativeName>
        <fullName>39S ribosomal protein L48, mitochondrial</fullName>
        <shortName>L48mt</shortName>
        <shortName>MRP-L48</shortName>
    </alternativeName>
</protein>
<gene>
    <name type="primary">MRPL48</name>
</gene>
<proteinExistence type="evidence at protein level"/>
<name>RM48_BOVIN</name>